<evidence type="ECO:0000255" key="1">
    <source>
        <dbReference type="HAMAP-Rule" id="MF_00645"/>
    </source>
</evidence>
<proteinExistence type="inferred from homology"/>
<feature type="chain" id="PRO_1000212382" description="Protein M1425_1941">
    <location>
        <begin position="1"/>
        <end position="227"/>
    </location>
</feature>
<feature type="domain" description="AMMECR1" evidence="1">
    <location>
        <begin position="15"/>
        <end position="209"/>
    </location>
</feature>
<name>Y1941_SACI4</name>
<gene>
    <name type="ordered locus">M1425_1941</name>
</gene>
<protein>
    <recommendedName>
        <fullName evidence="1">Protein M1425_1941</fullName>
    </recommendedName>
</protein>
<organism>
    <name type="scientific">Saccharolobus islandicus (strain M.14.25 / Kamchatka #1)</name>
    <name type="common">Sulfolobus islandicus</name>
    <dbReference type="NCBI Taxonomy" id="427317"/>
    <lineage>
        <taxon>Archaea</taxon>
        <taxon>Thermoproteota</taxon>
        <taxon>Thermoprotei</taxon>
        <taxon>Sulfolobales</taxon>
        <taxon>Sulfolobaceae</taxon>
        <taxon>Saccharolobus</taxon>
    </lineage>
</organism>
<reference key="1">
    <citation type="journal article" date="2009" name="Proc. Natl. Acad. Sci. U.S.A.">
        <title>Biogeography of the Sulfolobus islandicus pan-genome.</title>
        <authorList>
            <person name="Reno M.L."/>
            <person name="Held N.L."/>
            <person name="Fields C.J."/>
            <person name="Burke P.V."/>
            <person name="Whitaker R.J."/>
        </authorList>
    </citation>
    <scope>NUCLEOTIDE SEQUENCE [LARGE SCALE GENOMIC DNA]</scope>
    <source>
        <strain>M.14.25 / Kamchatka #1</strain>
    </source>
</reference>
<accession>C3MYC8</accession>
<dbReference type="EMBL" id="CP001400">
    <property type="protein sequence ID" value="ACP38685.1"/>
    <property type="molecule type" value="Genomic_DNA"/>
</dbReference>
<dbReference type="SMR" id="C3MYC8"/>
<dbReference type="KEGG" id="sia:M1425_1941"/>
<dbReference type="HOGENOM" id="CLU_095686_1_1_2"/>
<dbReference type="Proteomes" id="UP000001350">
    <property type="component" value="Chromosome"/>
</dbReference>
<dbReference type="Gene3D" id="3.30.700.20">
    <property type="entry name" value="Hypothetical protein ph0010, domain 1"/>
    <property type="match status" value="1"/>
</dbReference>
<dbReference type="Gene3D" id="3.30.1490.150">
    <property type="entry name" value="Hypothetical protein ph0010, domain 2"/>
    <property type="match status" value="1"/>
</dbReference>
<dbReference type="HAMAP" id="MF_00645">
    <property type="entry name" value="AMMECR1"/>
    <property type="match status" value="1"/>
</dbReference>
<dbReference type="InterPro" id="IPR023473">
    <property type="entry name" value="AMMECR1"/>
</dbReference>
<dbReference type="InterPro" id="IPR036071">
    <property type="entry name" value="AMMECR1_dom_sf"/>
</dbReference>
<dbReference type="InterPro" id="IPR002733">
    <property type="entry name" value="AMMECR1_domain"/>
</dbReference>
<dbReference type="InterPro" id="IPR027485">
    <property type="entry name" value="AMMECR1_N"/>
</dbReference>
<dbReference type="InterPro" id="IPR027623">
    <property type="entry name" value="AmmeMemoSam_A"/>
</dbReference>
<dbReference type="InterPro" id="IPR023472">
    <property type="entry name" value="Uncharacterised_MJ0810"/>
</dbReference>
<dbReference type="NCBIfam" id="TIGR04335">
    <property type="entry name" value="AmmeMemoSam_A"/>
    <property type="match status" value="1"/>
</dbReference>
<dbReference type="NCBIfam" id="TIGR00296">
    <property type="entry name" value="TIGR00296 family protein"/>
    <property type="match status" value="1"/>
</dbReference>
<dbReference type="PANTHER" id="PTHR13016:SF0">
    <property type="entry name" value="AMME SYNDROME CANDIDATE GENE 1 PROTEIN"/>
    <property type="match status" value="1"/>
</dbReference>
<dbReference type="PANTHER" id="PTHR13016">
    <property type="entry name" value="AMMECR1 HOMOLOG"/>
    <property type="match status" value="1"/>
</dbReference>
<dbReference type="Pfam" id="PF01871">
    <property type="entry name" value="AMMECR1"/>
    <property type="match status" value="1"/>
</dbReference>
<dbReference type="SUPFAM" id="SSF143447">
    <property type="entry name" value="AMMECR1-like"/>
    <property type="match status" value="1"/>
</dbReference>
<dbReference type="PROSITE" id="PS51112">
    <property type="entry name" value="AMMECR1"/>
    <property type="match status" value="1"/>
</dbReference>
<sequence length="227" mass="25711">MIQGDLVQIQELNNEIGRFLIEIARKAIKEEFKLDKLDLSNYNNPILDKKGLAFVTLEKITYNTSSLRGCIGYVEAVAPLKQIVASAAKAAAFSDPRFNPLQKDELSEIIIEVTVLTKPEEIKVKDRWDLPKIIKVGEDGLIVEKGILHSGLLLPQVPMEYCWDEETFLAETCIKASLEPDCWLDNSVRIKRFHGIIFRETRPDGSDIIVVKPSDIKCKLNELLNNF</sequence>